<reference key="1">
    <citation type="journal article" date="2002" name="Genomics">
        <title>PJA1, encoding a RING-H2 finger ubiquitin ligase, is a novel human X chromosome gene abundantly expressed in brain.</title>
        <authorList>
            <person name="Yu P."/>
            <person name="Chen Y."/>
            <person name="Tagle D.A."/>
            <person name="Cai T."/>
        </authorList>
    </citation>
    <scope>NUCLEOTIDE SEQUENCE [MRNA] (ISOFORM 1)</scope>
    <source>
        <strain>129/SvJ</strain>
    </source>
</reference>
<reference key="2">
    <citation type="journal article" date="2003" name="DNA Res.">
        <title>Prediction of the coding sequences of mouse homologues of KIAA gene: II. The complete nucleotide sequences of 400 mouse KIAA-homologous cDNAs identified by screening of terminal sequences of cDNA clones randomly sampled from size-fractionated libraries.</title>
        <authorList>
            <person name="Okazaki N."/>
            <person name="Kikuno R."/>
            <person name="Ohara R."/>
            <person name="Inamoto S."/>
            <person name="Aizawa H."/>
            <person name="Yuasa S."/>
            <person name="Nakajima D."/>
            <person name="Nagase T."/>
            <person name="Ohara O."/>
            <person name="Koga H."/>
        </authorList>
    </citation>
    <scope>NUCLEOTIDE SEQUENCE [LARGE SCALE MRNA] (ISOFORM 1)</scope>
    <source>
        <tissue>Brain</tissue>
    </source>
</reference>
<reference key="3">
    <citation type="journal article" date="2005" name="Science">
        <title>The transcriptional landscape of the mammalian genome.</title>
        <authorList>
            <person name="Carninci P."/>
            <person name="Kasukawa T."/>
            <person name="Katayama S."/>
            <person name="Gough J."/>
            <person name="Frith M.C."/>
            <person name="Maeda N."/>
            <person name="Oyama R."/>
            <person name="Ravasi T."/>
            <person name="Lenhard B."/>
            <person name="Wells C."/>
            <person name="Kodzius R."/>
            <person name="Shimokawa K."/>
            <person name="Bajic V.B."/>
            <person name="Brenner S.E."/>
            <person name="Batalov S."/>
            <person name="Forrest A.R."/>
            <person name="Zavolan M."/>
            <person name="Davis M.J."/>
            <person name="Wilming L.G."/>
            <person name="Aidinis V."/>
            <person name="Allen J.E."/>
            <person name="Ambesi-Impiombato A."/>
            <person name="Apweiler R."/>
            <person name="Aturaliya R.N."/>
            <person name="Bailey T.L."/>
            <person name="Bansal M."/>
            <person name="Baxter L."/>
            <person name="Beisel K.W."/>
            <person name="Bersano T."/>
            <person name="Bono H."/>
            <person name="Chalk A.M."/>
            <person name="Chiu K.P."/>
            <person name="Choudhary V."/>
            <person name="Christoffels A."/>
            <person name="Clutterbuck D.R."/>
            <person name="Crowe M.L."/>
            <person name="Dalla E."/>
            <person name="Dalrymple B.P."/>
            <person name="de Bono B."/>
            <person name="Della Gatta G."/>
            <person name="di Bernardo D."/>
            <person name="Down T."/>
            <person name="Engstrom P."/>
            <person name="Fagiolini M."/>
            <person name="Faulkner G."/>
            <person name="Fletcher C.F."/>
            <person name="Fukushima T."/>
            <person name="Furuno M."/>
            <person name="Futaki S."/>
            <person name="Gariboldi M."/>
            <person name="Georgii-Hemming P."/>
            <person name="Gingeras T.R."/>
            <person name="Gojobori T."/>
            <person name="Green R.E."/>
            <person name="Gustincich S."/>
            <person name="Harbers M."/>
            <person name="Hayashi Y."/>
            <person name="Hensch T.K."/>
            <person name="Hirokawa N."/>
            <person name="Hill D."/>
            <person name="Huminiecki L."/>
            <person name="Iacono M."/>
            <person name="Ikeo K."/>
            <person name="Iwama A."/>
            <person name="Ishikawa T."/>
            <person name="Jakt M."/>
            <person name="Kanapin A."/>
            <person name="Katoh M."/>
            <person name="Kawasawa Y."/>
            <person name="Kelso J."/>
            <person name="Kitamura H."/>
            <person name="Kitano H."/>
            <person name="Kollias G."/>
            <person name="Krishnan S.P."/>
            <person name="Kruger A."/>
            <person name="Kummerfeld S.K."/>
            <person name="Kurochkin I.V."/>
            <person name="Lareau L.F."/>
            <person name="Lazarevic D."/>
            <person name="Lipovich L."/>
            <person name="Liu J."/>
            <person name="Liuni S."/>
            <person name="McWilliam S."/>
            <person name="Madan Babu M."/>
            <person name="Madera M."/>
            <person name="Marchionni L."/>
            <person name="Matsuda H."/>
            <person name="Matsuzawa S."/>
            <person name="Miki H."/>
            <person name="Mignone F."/>
            <person name="Miyake S."/>
            <person name="Morris K."/>
            <person name="Mottagui-Tabar S."/>
            <person name="Mulder N."/>
            <person name="Nakano N."/>
            <person name="Nakauchi H."/>
            <person name="Ng P."/>
            <person name="Nilsson R."/>
            <person name="Nishiguchi S."/>
            <person name="Nishikawa S."/>
            <person name="Nori F."/>
            <person name="Ohara O."/>
            <person name="Okazaki Y."/>
            <person name="Orlando V."/>
            <person name="Pang K.C."/>
            <person name="Pavan W.J."/>
            <person name="Pavesi G."/>
            <person name="Pesole G."/>
            <person name="Petrovsky N."/>
            <person name="Piazza S."/>
            <person name="Reed J."/>
            <person name="Reid J.F."/>
            <person name="Ring B.Z."/>
            <person name="Ringwald M."/>
            <person name="Rost B."/>
            <person name="Ruan Y."/>
            <person name="Salzberg S.L."/>
            <person name="Sandelin A."/>
            <person name="Schneider C."/>
            <person name="Schoenbach C."/>
            <person name="Sekiguchi K."/>
            <person name="Semple C.A."/>
            <person name="Seno S."/>
            <person name="Sessa L."/>
            <person name="Sheng Y."/>
            <person name="Shibata Y."/>
            <person name="Shimada H."/>
            <person name="Shimada K."/>
            <person name="Silva D."/>
            <person name="Sinclair B."/>
            <person name="Sperling S."/>
            <person name="Stupka E."/>
            <person name="Sugiura K."/>
            <person name="Sultana R."/>
            <person name="Takenaka Y."/>
            <person name="Taki K."/>
            <person name="Tammoja K."/>
            <person name="Tan S.L."/>
            <person name="Tang S."/>
            <person name="Taylor M.S."/>
            <person name="Tegner J."/>
            <person name="Teichmann S.A."/>
            <person name="Ueda H.R."/>
            <person name="van Nimwegen E."/>
            <person name="Verardo R."/>
            <person name="Wei C.L."/>
            <person name="Yagi K."/>
            <person name="Yamanishi H."/>
            <person name="Zabarovsky E."/>
            <person name="Zhu S."/>
            <person name="Zimmer A."/>
            <person name="Hide W."/>
            <person name="Bult C."/>
            <person name="Grimmond S.M."/>
            <person name="Teasdale R.D."/>
            <person name="Liu E.T."/>
            <person name="Brusic V."/>
            <person name="Quackenbush J."/>
            <person name="Wahlestedt C."/>
            <person name="Mattick J.S."/>
            <person name="Hume D.A."/>
            <person name="Kai C."/>
            <person name="Sasaki D."/>
            <person name="Tomaru Y."/>
            <person name="Fukuda S."/>
            <person name="Kanamori-Katayama M."/>
            <person name="Suzuki M."/>
            <person name="Aoki J."/>
            <person name="Arakawa T."/>
            <person name="Iida J."/>
            <person name="Imamura K."/>
            <person name="Itoh M."/>
            <person name="Kato T."/>
            <person name="Kawaji H."/>
            <person name="Kawagashira N."/>
            <person name="Kawashima T."/>
            <person name="Kojima M."/>
            <person name="Kondo S."/>
            <person name="Konno H."/>
            <person name="Nakano K."/>
            <person name="Ninomiya N."/>
            <person name="Nishio T."/>
            <person name="Okada M."/>
            <person name="Plessy C."/>
            <person name="Shibata K."/>
            <person name="Shiraki T."/>
            <person name="Suzuki S."/>
            <person name="Tagami M."/>
            <person name="Waki K."/>
            <person name="Watahiki A."/>
            <person name="Okamura-Oho Y."/>
            <person name="Suzuki H."/>
            <person name="Kawai J."/>
            <person name="Hayashizaki Y."/>
        </authorList>
    </citation>
    <scope>NUCLEOTIDE SEQUENCE [LARGE SCALE MRNA] (ISOFORMS 1 AND 2)</scope>
    <source>
        <strain>C57BL/6J</strain>
        <tissue>Heart</tissue>
        <tissue>Lung</tissue>
    </source>
</reference>
<reference key="4">
    <citation type="journal article" date="2004" name="Genome Res.">
        <title>The status, quality, and expansion of the NIH full-length cDNA project: the Mammalian Gene Collection (MGC).</title>
        <authorList>
            <consortium name="The MGC Project Team"/>
        </authorList>
    </citation>
    <scope>NUCLEOTIDE SEQUENCE [LARGE SCALE MRNA] (ISOFORM 2)</scope>
    <scope>NUCLEOTIDE SEQUENCE [LARGE SCALE MRNA] OF 326-707 (ISOFORM 1)</scope>
    <source>
        <strain>FVB/N</strain>
        <tissue>Eye</tissue>
        <tissue>Mammary tumor</tissue>
    </source>
</reference>
<reference key="5">
    <citation type="submission" date="2009-01" db="UniProtKB">
        <authorList>
            <person name="Lubec G."/>
            <person name="Sunyer B."/>
            <person name="Chen W.-Q."/>
        </authorList>
    </citation>
    <scope>PROTEIN SEQUENCE OF 8-18</scope>
    <scope>IDENTIFICATION BY MASS SPECTROMETRY</scope>
    <source>
        <strain>OF1</strain>
        <tissue>Hippocampus</tissue>
    </source>
</reference>
<reference key="6">
    <citation type="journal article" date="2010" name="Cell">
        <title>A tissue-specific atlas of mouse protein phosphorylation and expression.</title>
        <authorList>
            <person name="Huttlin E.L."/>
            <person name="Jedrychowski M.P."/>
            <person name="Elias J.E."/>
            <person name="Goswami T."/>
            <person name="Rad R."/>
            <person name="Beausoleil S.A."/>
            <person name="Villen J."/>
            <person name="Haas W."/>
            <person name="Sowa M.E."/>
            <person name="Gygi S.P."/>
        </authorList>
    </citation>
    <scope>IDENTIFICATION BY MASS SPECTROMETRY [LARGE SCALE ANALYSIS]</scope>
    <source>
        <tissue>Heart</tissue>
    </source>
</reference>
<protein>
    <recommendedName>
        <fullName>E3 ubiquitin-protein ligase Praja-2</fullName>
        <shortName>Praja2</shortName>
        <ecNumber evidence="2">2.3.2.27</ecNumber>
    </recommendedName>
    <alternativeName>
        <fullName>RING finger protein 131</fullName>
    </alternativeName>
    <alternativeName>
        <fullName evidence="8">RING-type E3 ubiquitin transferase Praja-2</fullName>
    </alternativeName>
</protein>
<comment type="function">
    <text evidence="2">Has E2-dependent E3 ubiquitin-protein ligase activity. Responsible for ubiquitination of cAMP-dependent protein kinase type I and type II-alpha/beta regulatory subunits and for targeting them for proteasomal degradation. Essential for PKA-mediated long-term memory processes. Through the ubiquitination of MFHAS1, positively regulates the TLR2 signaling pathway that leads to the activation of the downstream p38 and JNK MAP kinases and promotes the polarization of macrophages toward the pro-inflammatory M1 phenotype. Plays a role in ciliogenesis by ubiquitinating OFD1.</text>
</comment>
<comment type="catalytic activity">
    <reaction evidence="2">
        <text>S-ubiquitinyl-[E2 ubiquitin-conjugating enzyme]-L-cysteine + [acceptor protein]-L-lysine = [E2 ubiquitin-conjugating enzyme]-L-cysteine + N(6)-ubiquitinyl-[acceptor protein]-L-lysine.</text>
        <dbReference type="EC" id="2.3.2.27"/>
    </reaction>
</comment>
<comment type="pathway">
    <text evidence="2">Protein modification; protein ubiquitination.</text>
</comment>
<comment type="subunit">
    <text evidence="2">Binds ubiquitin-conjugating enzymes (E2s). In vitro, interacts with the ubiquitin-conjugating enzyme, UBE2D2. The phosphorylated form interacts with PRKAR1A, PRKAR2A and PRKAR2B. Binds the catalytic subunits of cAMP-dependent protein kinase. Interacts with MFHAS1. Interacts with TBC1D31; the interaction is direct and recruits PJA2 to centrosomes.</text>
</comment>
<comment type="interaction">
    <interactant intactId="EBI-1801691">
        <id>Q80U04</id>
    </interactant>
    <interactant intactId="EBI-7840438">
        <id>P61809</id>
        <label>Cdk5r1</label>
    </interactant>
    <organismsDiffer>false</organismsDiffer>
    <experiments>2</experiments>
</comment>
<comment type="subcellular location">
    <subcellularLocation>
        <location evidence="2">Cytoplasm</location>
    </subcellularLocation>
    <subcellularLocation>
        <location evidence="2">Cell membrane</location>
    </subcellularLocation>
    <subcellularLocation>
        <location evidence="2">Endoplasmic reticulum membrane</location>
        <topology evidence="2">Peripheral membrane protein</topology>
    </subcellularLocation>
    <subcellularLocation>
        <location evidence="2">Golgi apparatus membrane</location>
        <topology evidence="2">Peripheral membrane protein</topology>
    </subcellularLocation>
    <subcellularLocation>
        <location evidence="3">Synapse</location>
    </subcellularLocation>
    <subcellularLocation>
        <location evidence="3">Postsynaptic density</location>
    </subcellularLocation>
    <subcellularLocation>
        <location evidence="2">Cytoplasm</location>
        <location evidence="2">Cytoskeleton</location>
        <location evidence="2">Microtubule organizing center</location>
        <location evidence="2">Centrosome</location>
    </subcellularLocation>
    <text evidence="2 3">Localizes at the cytoplasmic side of endoplasmic reticulum and Golgi apparatus (By similarity). Expressed in the postsynaptic density region of synapses (By similarity). Colocalizes with PRKAR2A and PRKAR2B in the cytoplasm and the cell membrane (By similarity).</text>
</comment>
<comment type="alternative products">
    <event type="alternative splicing"/>
    <isoform>
        <id>Q80U04-1</id>
        <name>1</name>
        <sequence type="displayed"/>
    </isoform>
    <isoform>
        <id>Q80U04-2</id>
        <name>2</name>
        <sequence type="described" ref="VSP_023199"/>
    </isoform>
</comment>
<comment type="sequence caution" evidence="8">
    <conflict type="erroneous initiation">
        <sequence resource="EMBL-CDS" id="BAC65564"/>
    </conflict>
    <text>Extended N-terminus.</text>
</comment>
<name>PJA2_MOUSE</name>
<gene>
    <name type="primary">Pja2</name>
    <name type="synonym">Kiaa0438</name>
    <name type="synonym">Rnf131</name>
</gene>
<keyword id="KW-0007">Acetylation</keyword>
<keyword id="KW-0025">Alternative splicing</keyword>
<keyword id="KW-1003">Cell membrane</keyword>
<keyword id="KW-0963">Cytoplasm</keyword>
<keyword id="KW-0206">Cytoskeleton</keyword>
<keyword id="KW-0903">Direct protein sequencing</keyword>
<keyword id="KW-0256">Endoplasmic reticulum</keyword>
<keyword id="KW-0333">Golgi apparatus</keyword>
<keyword id="KW-0472">Membrane</keyword>
<keyword id="KW-0479">Metal-binding</keyword>
<keyword id="KW-0597">Phosphoprotein</keyword>
<keyword id="KW-1185">Reference proteome</keyword>
<keyword id="KW-0770">Synapse</keyword>
<keyword id="KW-0808">Transferase</keyword>
<keyword id="KW-0833">Ubl conjugation pathway</keyword>
<keyword id="KW-0862">Zinc</keyword>
<keyword id="KW-0863">Zinc-finger</keyword>
<accession>Q80U04</accession>
<accession>Q3TH95</accession>
<accession>Q810E3</accession>
<accession>Q91W46</accession>
<accession>Q99KC0</accession>
<organism>
    <name type="scientific">Mus musculus</name>
    <name type="common">Mouse</name>
    <dbReference type="NCBI Taxonomy" id="10090"/>
    <lineage>
        <taxon>Eukaryota</taxon>
        <taxon>Metazoa</taxon>
        <taxon>Chordata</taxon>
        <taxon>Craniata</taxon>
        <taxon>Vertebrata</taxon>
        <taxon>Euteleostomi</taxon>
        <taxon>Mammalia</taxon>
        <taxon>Eutheria</taxon>
        <taxon>Euarchontoglires</taxon>
        <taxon>Glires</taxon>
        <taxon>Rodentia</taxon>
        <taxon>Myomorpha</taxon>
        <taxon>Muroidea</taxon>
        <taxon>Muridae</taxon>
        <taxon>Murinae</taxon>
        <taxon>Mus</taxon>
        <taxon>Mus</taxon>
    </lineage>
</organism>
<sequence>MSQYTEKEPSVMDQESSKAAWPKPAGGYQTITGRRYGRRHAYVSFKPCMTRHERSLGRAGDDYEVLELDDVPKENTSGSSSLDQVHPALPNEPTVEKSETEISTCGPALNQSTESSPSIATVCHSEEVRETLESNTNLHNRTETEHTPAVCNVSSVQNGIMLVHTDSYDPDSKHDENGSLQLGAEAVEGGRHQKGLGRAVFELENGEAEIYADLSPSVPSLNGEISEAFEELDSAPLEKSSTADAELVHQNGQEFQRSSEDGVVRKRRQDDTDQGRQTENSTEDADCAPGHVEQNTSDRANHHGSSPEQVVRPKVRKVISSSQVDQEIGFNRHEAKQRSVQRWREALEVEECSSDDPIIKCDDYDGDHDCMFLTPTYSRVTQRETERNRVTSENGATASGRQESRDNAFWNACGEYYQLFDKDEDSSECSDGEWSASLPHRFSGTEKDQSSSDDSWETLPGKDENDPELQSDSSGPEEENQELSLQEGEQTSLEEGEIPWLQYNEVNESSSDEGNEPANEFAQPEAFMLDGNNNLEDDSSVSEDLDVDWSLFDGFADGLGVAEAISYVDPQFLTYMALEERLAQAMETALAHLESLAVDVEVANPPASKESIDGLPETLVLEDHTAIGQEQCCPICCSEYIKDDIATELPCHHFFHKPCVSIWLQKSGTCPVCRRHFPPAVIDASAAASSDPDPDASPANDNAEEAP</sequence>
<evidence type="ECO:0000250" key="1"/>
<evidence type="ECO:0000250" key="2">
    <source>
        <dbReference type="UniProtKB" id="O43164"/>
    </source>
</evidence>
<evidence type="ECO:0000250" key="3">
    <source>
        <dbReference type="UniProtKB" id="Q63364"/>
    </source>
</evidence>
<evidence type="ECO:0000255" key="4">
    <source>
        <dbReference type="PROSITE-ProRule" id="PRU00175"/>
    </source>
</evidence>
<evidence type="ECO:0000256" key="5">
    <source>
        <dbReference type="SAM" id="MobiDB-lite"/>
    </source>
</evidence>
<evidence type="ECO:0000303" key="6">
    <source>
    </source>
</evidence>
<evidence type="ECO:0000303" key="7">
    <source>
    </source>
</evidence>
<evidence type="ECO:0000305" key="8"/>
<proteinExistence type="evidence at protein level"/>
<dbReference type="EC" id="2.3.2.27" evidence="2"/>
<dbReference type="EMBL" id="AF493070">
    <property type="protein sequence ID" value="AAO85470.1"/>
    <property type="molecule type" value="mRNA"/>
</dbReference>
<dbReference type="EMBL" id="AK122282">
    <property type="protein sequence ID" value="BAC65564.1"/>
    <property type="status" value="ALT_INIT"/>
    <property type="molecule type" value="mRNA"/>
</dbReference>
<dbReference type="EMBL" id="AK144586">
    <property type="protein sequence ID" value="BAE25949.1"/>
    <property type="molecule type" value="mRNA"/>
</dbReference>
<dbReference type="EMBL" id="AK168371">
    <property type="protein sequence ID" value="BAE40303.1"/>
    <property type="molecule type" value="mRNA"/>
</dbReference>
<dbReference type="EMBL" id="BC004742">
    <property type="protein sequence ID" value="AAH04742.1"/>
    <property type="molecule type" value="mRNA"/>
</dbReference>
<dbReference type="EMBL" id="BC017130">
    <property type="protein sequence ID" value="AAH17130.1"/>
    <property type="molecule type" value="mRNA"/>
</dbReference>
<dbReference type="CCDS" id="CCDS37674.1">
    <molecule id="Q80U04-2"/>
</dbReference>
<dbReference type="CCDS" id="CCDS37675.1">
    <molecule id="Q80U04-1"/>
</dbReference>
<dbReference type="RefSeq" id="NP_001020480.1">
    <molecule id="Q80U04-1"/>
    <property type="nucleotide sequence ID" value="NM_001025309.1"/>
</dbReference>
<dbReference type="RefSeq" id="NP_659108.1">
    <molecule id="Q80U04-2"/>
    <property type="nucleotide sequence ID" value="NM_144859.2"/>
</dbReference>
<dbReference type="SMR" id="Q80U04"/>
<dbReference type="BioGRID" id="230345">
    <property type="interactions" value="8"/>
</dbReference>
<dbReference type="DIP" id="DIP-47060N"/>
<dbReference type="FunCoup" id="Q80U04">
    <property type="interactions" value="1927"/>
</dbReference>
<dbReference type="IntAct" id="Q80U04">
    <property type="interactions" value="2"/>
</dbReference>
<dbReference type="STRING" id="10090.ENSMUSP00000134380"/>
<dbReference type="GlyGen" id="Q80U04">
    <property type="glycosylation" value="2 sites, 1 N-linked glycan (1 site), 1 O-linked glycan (1 site)"/>
</dbReference>
<dbReference type="iPTMnet" id="Q80U04"/>
<dbReference type="PhosphoSitePlus" id="Q80U04"/>
<dbReference type="jPOST" id="Q80U04"/>
<dbReference type="PaxDb" id="10090-ENSMUSP00000134380"/>
<dbReference type="PeptideAtlas" id="Q80U04"/>
<dbReference type="ProteomicsDB" id="289651">
    <molecule id="Q80U04-1"/>
</dbReference>
<dbReference type="ProteomicsDB" id="289652">
    <molecule id="Q80U04-2"/>
</dbReference>
<dbReference type="Pumba" id="Q80U04"/>
<dbReference type="Antibodypedia" id="25290">
    <property type="antibodies" value="219 antibodies from 31 providers"/>
</dbReference>
<dbReference type="DNASU" id="224938"/>
<dbReference type="Ensembl" id="ENSMUST00000024888.15">
    <molecule id="Q80U04-1"/>
    <property type="protein sequence ID" value="ENSMUSP00000024888.9"/>
    <property type="gene ID" value="ENSMUSG00000024083.17"/>
</dbReference>
<dbReference type="Ensembl" id="ENSMUST00000024889.14">
    <molecule id="Q80U04-2"/>
    <property type="protein sequence ID" value="ENSMUSP00000024889.8"/>
    <property type="gene ID" value="ENSMUSG00000024083.17"/>
</dbReference>
<dbReference type="Ensembl" id="ENSMUST00000172733.2">
    <molecule id="Q80U04-2"/>
    <property type="protein sequence ID" value="ENSMUSP00000133730.2"/>
    <property type="gene ID" value="ENSMUSG00000024083.17"/>
</dbReference>
<dbReference type="Ensembl" id="ENSMUST00000172818.8">
    <molecule id="Q80U04-1"/>
    <property type="protein sequence ID" value="ENSMUSP00000134380.2"/>
    <property type="gene ID" value="ENSMUSG00000024083.17"/>
</dbReference>
<dbReference type="GeneID" id="224938"/>
<dbReference type="KEGG" id="mmu:224938"/>
<dbReference type="UCSC" id="uc008dfu.1">
    <molecule id="Q80U04-1"/>
    <property type="organism name" value="mouse"/>
</dbReference>
<dbReference type="UCSC" id="uc008dfv.1">
    <molecule id="Q80U04-2"/>
    <property type="organism name" value="mouse"/>
</dbReference>
<dbReference type="AGR" id="MGI:2159342"/>
<dbReference type="CTD" id="9867"/>
<dbReference type="MGI" id="MGI:2159342">
    <property type="gene designation" value="Pja2"/>
</dbReference>
<dbReference type="VEuPathDB" id="HostDB:ENSMUSG00000024083"/>
<dbReference type="eggNOG" id="KOG0800">
    <property type="taxonomic scope" value="Eukaryota"/>
</dbReference>
<dbReference type="GeneTree" id="ENSGT00940000154585"/>
<dbReference type="HOGENOM" id="CLU_026830_1_0_1"/>
<dbReference type="InParanoid" id="Q80U04"/>
<dbReference type="OMA" id="NHSEGEC"/>
<dbReference type="OrthoDB" id="21204at2759"/>
<dbReference type="PhylomeDB" id="Q80U04"/>
<dbReference type="TreeFam" id="TF330711"/>
<dbReference type="Reactome" id="R-MMU-983168">
    <property type="pathway name" value="Antigen processing: Ubiquitination &amp; Proteasome degradation"/>
</dbReference>
<dbReference type="UniPathway" id="UPA00143"/>
<dbReference type="BioGRID-ORCS" id="224938">
    <property type="hits" value="0 hits in 77 CRISPR screens"/>
</dbReference>
<dbReference type="ChiTaRS" id="Pja2">
    <property type="organism name" value="mouse"/>
</dbReference>
<dbReference type="PRO" id="PR:Q80U04"/>
<dbReference type="Proteomes" id="UP000000589">
    <property type="component" value="Chromosome 17"/>
</dbReference>
<dbReference type="RNAct" id="Q80U04">
    <property type="molecule type" value="protein"/>
</dbReference>
<dbReference type="Bgee" id="ENSMUSG00000024083">
    <property type="expression patterns" value="Expressed in dorsal pancreas and 254 other cell types or tissues"/>
</dbReference>
<dbReference type="GO" id="GO:0034451">
    <property type="term" value="C:centriolar satellite"/>
    <property type="evidence" value="ECO:0007669"/>
    <property type="project" value="Ensembl"/>
</dbReference>
<dbReference type="GO" id="GO:0005737">
    <property type="term" value="C:cytoplasm"/>
    <property type="evidence" value="ECO:0000250"/>
    <property type="project" value="UniProtKB"/>
</dbReference>
<dbReference type="GO" id="GO:0005789">
    <property type="term" value="C:endoplasmic reticulum membrane"/>
    <property type="evidence" value="ECO:0007669"/>
    <property type="project" value="UniProtKB-SubCell"/>
</dbReference>
<dbReference type="GO" id="GO:0098978">
    <property type="term" value="C:glutamatergic synapse"/>
    <property type="evidence" value="ECO:0007669"/>
    <property type="project" value="Ensembl"/>
</dbReference>
<dbReference type="GO" id="GO:0000139">
    <property type="term" value="C:Golgi membrane"/>
    <property type="evidence" value="ECO:0007669"/>
    <property type="project" value="UniProtKB-SubCell"/>
</dbReference>
<dbReference type="GO" id="GO:0005886">
    <property type="term" value="C:plasma membrane"/>
    <property type="evidence" value="ECO:0000250"/>
    <property type="project" value="UniProtKB"/>
</dbReference>
<dbReference type="GO" id="GO:0014069">
    <property type="term" value="C:postsynaptic density"/>
    <property type="evidence" value="ECO:0007669"/>
    <property type="project" value="UniProtKB-SubCell"/>
</dbReference>
<dbReference type="GO" id="GO:0034236">
    <property type="term" value="F:protein kinase A catalytic subunit binding"/>
    <property type="evidence" value="ECO:0000250"/>
    <property type="project" value="UniProtKB"/>
</dbReference>
<dbReference type="GO" id="GO:0034237">
    <property type="term" value="F:protein kinase A regulatory subunit binding"/>
    <property type="evidence" value="ECO:0000250"/>
    <property type="project" value="UniProtKB"/>
</dbReference>
<dbReference type="GO" id="GO:0061630">
    <property type="term" value="F:ubiquitin protein ligase activity"/>
    <property type="evidence" value="ECO:0007669"/>
    <property type="project" value="Ensembl"/>
</dbReference>
<dbReference type="GO" id="GO:0008270">
    <property type="term" value="F:zinc ion binding"/>
    <property type="evidence" value="ECO:0007669"/>
    <property type="project" value="UniProtKB-KW"/>
</dbReference>
<dbReference type="GO" id="GO:0006954">
    <property type="term" value="P:inflammatory response"/>
    <property type="evidence" value="ECO:0000250"/>
    <property type="project" value="UniProtKB"/>
</dbReference>
<dbReference type="GO" id="GO:0045087">
    <property type="term" value="P:innate immune response"/>
    <property type="evidence" value="ECO:0000250"/>
    <property type="project" value="UniProtKB"/>
</dbReference>
<dbReference type="GO" id="GO:0007616">
    <property type="term" value="P:long-term memory"/>
    <property type="evidence" value="ECO:0000250"/>
    <property type="project" value="UniProtKB"/>
</dbReference>
<dbReference type="GO" id="GO:0046330">
    <property type="term" value="P:positive regulation of JNK cascade"/>
    <property type="evidence" value="ECO:0000250"/>
    <property type="project" value="UniProtKB"/>
</dbReference>
<dbReference type="GO" id="GO:1900745">
    <property type="term" value="P:positive regulation of p38MAPK cascade"/>
    <property type="evidence" value="ECO:0000250"/>
    <property type="project" value="UniProtKB"/>
</dbReference>
<dbReference type="GO" id="GO:0034137">
    <property type="term" value="P:positive regulation of toll-like receptor 2 signaling pathway"/>
    <property type="evidence" value="ECO:0000250"/>
    <property type="project" value="UniProtKB"/>
</dbReference>
<dbReference type="GO" id="GO:0043161">
    <property type="term" value="P:proteasome-mediated ubiquitin-dependent protein catabolic process"/>
    <property type="evidence" value="ECO:0007669"/>
    <property type="project" value="Ensembl"/>
</dbReference>
<dbReference type="GO" id="GO:0016567">
    <property type="term" value="P:protein ubiquitination"/>
    <property type="evidence" value="ECO:0000250"/>
    <property type="project" value="UniProtKB"/>
</dbReference>
<dbReference type="GO" id="GO:0043030">
    <property type="term" value="P:regulation of macrophage activation"/>
    <property type="evidence" value="ECO:0007669"/>
    <property type="project" value="Ensembl"/>
</dbReference>
<dbReference type="GO" id="GO:0010738">
    <property type="term" value="P:regulation of protein kinase A signaling"/>
    <property type="evidence" value="ECO:0000250"/>
    <property type="project" value="UniProtKB"/>
</dbReference>
<dbReference type="CDD" id="cd16465">
    <property type="entry name" value="RING-H2_PJA1_2"/>
    <property type="match status" value="1"/>
</dbReference>
<dbReference type="FunFam" id="3.30.40.10:FF:000152">
    <property type="entry name" value="E3 ubiquitin-protein ligase Praja-1 isoform X1"/>
    <property type="match status" value="1"/>
</dbReference>
<dbReference type="Gene3D" id="3.30.40.10">
    <property type="entry name" value="Zinc/RING finger domain, C3HC4 (zinc finger)"/>
    <property type="match status" value="1"/>
</dbReference>
<dbReference type="InterPro" id="IPR001841">
    <property type="entry name" value="Znf_RING"/>
</dbReference>
<dbReference type="InterPro" id="IPR013083">
    <property type="entry name" value="Znf_RING/FYVE/PHD"/>
</dbReference>
<dbReference type="PANTHER" id="PTHR15710">
    <property type="entry name" value="E3 UBIQUITIN-PROTEIN LIGASE PRAJA"/>
    <property type="match status" value="1"/>
</dbReference>
<dbReference type="PANTHER" id="PTHR15710:SF5">
    <property type="entry name" value="E3 UBIQUITIN-PROTEIN LIGASE PRAJA-2"/>
    <property type="match status" value="1"/>
</dbReference>
<dbReference type="Pfam" id="PF13639">
    <property type="entry name" value="zf-RING_2"/>
    <property type="match status" value="1"/>
</dbReference>
<dbReference type="SMART" id="SM00184">
    <property type="entry name" value="RING"/>
    <property type="match status" value="1"/>
</dbReference>
<dbReference type="SUPFAM" id="SSF57850">
    <property type="entry name" value="RING/U-box"/>
    <property type="match status" value="1"/>
</dbReference>
<dbReference type="PROSITE" id="PS50089">
    <property type="entry name" value="ZF_RING_2"/>
    <property type="match status" value="1"/>
</dbReference>
<feature type="initiator methionine" description="Removed" evidence="2">
    <location>
        <position position="1"/>
    </location>
</feature>
<feature type="chain" id="PRO_0000278231" description="E3 ubiquitin-protein ligase Praja-2">
    <location>
        <begin position="2"/>
        <end position="707"/>
    </location>
</feature>
<feature type="zinc finger region" description="RING-type; atypical" evidence="4">
    <location>
        <begin position="633"/>
        <end position="674"/>
    </location>
</feature>
<feature type="region of interest" description="Disordered" evidence="5">
    <location>
        <begin position="1"/>
        <end position="32"/>
    </location>
</feature>
<feature type="region of interest" description="Disordered" evidence="5">
    <location>
        <begin position="72"/>
        <end position="120"/>
    </location>
</feature>
<feature type="region of interest" description="Disordered" evidence="5">
    <location>
        <begin position="250"/>
        <end position="314"/>
    </location>
</feature>
<feature type="region of interest" description="Disordered" evidence="5">
    <location>
        <begin position="379"/>
        <end position="405"/>
    </location>
</feature>
<feature type="region of interest" description="Disordered" evidence="5">
    <location>
        <begin position="424"/>
        <end position="493"/>
    </location>
</feature>
<feature type="region of interest" description="Interaction with PRKAR1A, PRKAR2A and PRKAR2B" evidence="1">
    <location>
        <begin position="530"/>
        <end position="707"/>
    </location>
</feature>
<feature type="region of interest" description="Mediates interaction with TBC1D31" evidence="2">
    <location>
        <begin position="549"/>
        <end position="569"/>
    </location>
</feature>
<feature type="region of interest" description="Disordered" evidence="5">
    <location>
        <begin position="685"/>
        <end position="707"/>
    </location>
</feature>
<feature type="compositionally biased region" description="Basic and acidic residues" evidence="5">
    <location>
        <begin position="1"/>
        <end position="10"/>
    </location>
</feature>
<feature type="compositionally biased region" description="Polar residues" evidence="5">
    <location>
        <begin position="74"/>
        <end position="83"/>
    </location>
</feature>
<feature type="compositionally biased region" description="Polar residues" evidence="5">
    <location>
        <begin position="109"/>
        <end position="119"/>
    </location>
</feature>
<feature type="compositionally biased region" description="Basic and acidic residues" evidence="5">
    <location>
        <begin position="257"/>
        <end position="276"/>
    </location>
</feature>
<feature type="compositionally biased region" description="Polar residues" evidence="5">
    <location>
        <begin position="293"/>
        <end position="308"/>
    </location>
</feature>
<feature type="compositionally biased region" description="Basic and acidic residues" evidence="5">
    <location>
        <begin position="381"/>
        <end position="390"/>
    </location>
</feature>
<feature type="compositionally biased region" description="Polar residues" evidence="5">
    <location>
        <begin position="391"/>
        <end position="401"/>
    </location>
</feature>
<feature type="compositionally biased region" description="Acidic residues" evidence="5">
    <location>
        <begin position="465"/>
        <end position="481"/>
    </location>
</feature>
<feature type="compositionally biased region" description="Polar residues" evidence="5">
    <location>
        <begin position="482"/>
        <end position="491"/>
    </location>
</feature>
<feature type="compositionally biased region" description="Low complexity" evidence="5">
    <location>
        <begin position="685"/>
        <end position="701"/>
    </location>
</feature>
<feature type="modified residue" description="N-acetylserine" evidence="2">
    <location>
        <position position="2"/>
    </location>
</feature>
<feature type="modified residue" description="Phosphoserine" evidence="2">
    <location>
        <position position="306"/>
    </location>
</feature>
<feature type="modified residue" description="Phosphoserine" evidence="2">
    <location>
        <position position="320"/>
    </location>
</feature>
<feature type="modified residue" description="Phosphoserine; by PKA" evidence="2">
    <location>
        <position position="339"/>
    </location>
</feature>
<feature type="modified residue" description="Phosphothreonine; by PKA" evidence="2">
    <location>
        <position position="385"/>
    </location>
</feature>
<feature type="modified residue" description="Phosphoserine" evidence="2">
    <location>
        <position position="430"/>
    </location>
</feature>
<feature type="splice variant" id="VSP_023199" description="In isoform 2." evidence="6 7">
    <original>SSECSDGEWSASLPHRFSGTEKDQSSSDDSWETLPGKDENDPELQSDSSGPEEENQELSLQEG</original>
    <variation>R</variation>
    <location>
        <begin position="426"/>
        <end position="488"/>
    </location>
</feature>
<feature type="sequence conflict" description="In Ref. 3; BAE40303." evidence="8" ref="3">
    <original>E</original>
    <variation>A</variation>
    <location>
        <position position="230"/>
    </location>
</feature>